<protein>
    <recommendedName>
        <fullName evidence="1">tRNA U34 carboxymethyltransferase</fullName>
        <ecNumber evidence="1">2.5.1.-</ecNumber>
    </recommendedName>
</protein>
<gene>
    <name evidence="1" type="primary">cmoB</name>
    <name type="ordered locus">PSPTO_4213</name>
</gene>
<reference key="1">
    <citation type="journal article" date="2003" name="Proc. Natl. Acad. Sci. U.S.A.">
        <title>The complete genome sequence of the Arabidopsis and tomato pathogen Pseudomonas syringae pv. tomato DC3000.</title>
        <authorList>
            <person name="Buell C.R."/>
            <person name="Joardar V."/>
            <person name="Lindeberg M."/>
            <person name="Selengut J."/>
            <person name="Paulsen I.T."/>
            <person name="Gwinn M.L."/>
            <person name="Dodson R.J."/>
            <person name="DeBoy R.T."/>
            <person name="Durkin A.S."/>
            <person name="Kolonay J.F."/>
            <person name="Madupu R."/>
            <person name="Daugherty S.C."/>
            <person name="Brinkac L.M."/>
            <person name="Beanan M.J."/>
            <person name="Haft D.H."/>
            <person name="Nelson W.C."/>
            <person name="Davidsen T.M."/>
            <person name="Zafar N."/>
            <person name="Zhou L."/>
            <person name="Liu J."/>
            <person name="Yuan Q."/>
            <person name="Khouri H.M."/>
            <person name="Fedorova N.B."/>
            <person name="Tran B."/>
            <person name="Russell D."/>
            <person name="Berry K.J."/>
            <person name="Utterback T.R."/>
            <person name="Van Aken S.E."/>
            <person name="Feldblyum T.V."/>
            <person name="D'Ascenzo M."/>
            <person name="Deng W.-L."/>
            <person name="Ramos A.R."/>
            <person name="Alfano J.R."/>
            <person name="Cartinhour S."/>
            <person name="Chatterjee A.K."/>
            <person name="Delaney T.P."/>
            <person name="Lazarowitz S.G."/>
            <person name="Martin G.B."/>
            <person name="Schneider D.J."/>
            <person name="Tang X."/>
            <person name="Bender C.L."/>
            <person name="White O."/>
            <person name="Fraser C.M."/>
            <person name="Collmer A."/>
        </authorList>
    </citation>
    <scope>NUCLEOTIDE SEQUENCE [LARGE SCALE GENOMIC DNA]</scope>
    <source>
        <strain>ATCC BAA-871 / DC3000</strain>
    </source>
</reference>
<comment type="function">
    <text evidence="1">Catalyzes carboxymethyl transfer from carboxy-S-adenosyl-L-methionine (Cx-SAM) to 5-hydroxyuridine (ho5U) to form 5-carboxymethoxyuridine (cmo5U) at position 34 in tRNAs.</text>
</comment>
<comment type="catalytic activity">
    <reaction evidence="1">
        <text>carboxy-S-adenosyl-L-methionine + 5-hydroxyuridine(34) in tRNA = 5-carboxymethoxyuridine(34) in tRNA + S-adenosyl-L-homocysteine + H(+)</text>
        <dbReference type="Rhea" id="RHEA:52848"/>
        <dbReference type="Rhea" id="RHEA-COMP:13381"/>
        <dbReference type="Rhea" id="RHEA-COMP:13383"/>
        <dbReference type="ChEBI" id="CHEBI:15378"/>
        <dbReference type="ChEBI" id="CHEBI:57856"/>
        <dbReference type="ChEBI" id="CHEBI:134278"/>
        <dbReference type="ChEBI" id="CHEBI:136877"/>
        <dbReference type="ChEBI" id="CHEBI:136879"/>
    </reaction>
</comment>
<comment type="subunit">
    <text evidence="1">Homotetramer.</text>
</comment>
<comment type="similarity">
    <text evidence="1">Belongs to the class I-like SAM-binding methyltransferase superfamily. CmoB family.</text>
</comment>
<keyword id="KW-0002">3D-structure</keyword>
<keyword id="KW-1185">Reference proteome</keyword>
<keyword id="KW-0808">Transferase</keyword>
<keyword id="KW-0819">tRNA processing</keyword>
<accession>Q87XG5</accession>
<dbReference type="EC" id="2.5.1.-" evidence="1"/>
<dbReference type="EMBL" id="AE016853">
    <property type="protein sequence ID" value="AAO57669.1"/>
    <property type="molecule type" value="Genomic_DNA"/>
</dbReference>
<dbReference type="RefSeq" id="NP_793974.1">
    <property type="nucleotide sequence ID" value="NC_004578.1"/>
</dbReference>
<dbReference type="RefSeq" id="WP_005764771.1">
    <property type="nucleotide sequence ID" value="NC_004578.1"/>
</dbReference>
<dbReference type="PDB" id="4P7C">
    <property type="method" value="X-ray"/>
    <property type="resolution" value="1.85 A"/>
    <property type="chains" value="A/B=1-319"/>
</dbReference>
<dbReference type="PDBsum" id="4P7C"/>
<dbReference type="SMR" id="Q87XG5"/>
<dbReference type="STRING" id="223283.PSPTO_4213"/>
<dbReference type="DNASU" id="1185893"/>
<dbReference type="GeneID" id="1185893"/>
<dbReference type="KEGG" id="pst:PSPTO_4213"/>
<dbReference type="PATRIC" id="fig|223283.9.peg.4320"/>
<dbReference type="eggNOG" id="COG0500">
    <property type="taxonomic scope" value="Bacteria"/>
</dbReference>
<dbReference type="HOGENOM" id="CLU_052665_0_0_6"/>
<dbReference type="OrthoDB" id="9773188at2"/>
<dbReference type="PhylomeDB" id="Q87XG5"/>
<dbReference type="EvolutionaryTrace" id="Q87XG5"/>
<dbReference type="Proteomes" id="UP000002515">
    <property type="component" value="Chromosome"/>
</dbReference>
<dbReference type="GO" id="GO:0008168">
    <property type="term" value="F:methyltransferase activity"/>
    <property type="evidence" value="ECO:0007669"/>
    <property type="project" value="TreeGrafter"/>
</dbReference>
<dbReference type="GO" id="GO:0016765">
    <property type="term" value="F:transferase activity, transferring alkyl or aryl (other than methyl) groups"/>
    <property type="evidence" value="ECO:0007669"/>
    <property type="project" value="UniProtKB-UniRule"/>
</dbReference>
<dbReference type="GO" id="GO:0002098">
    <property type="term" value="P:tRNA wobble uridine modification"/>
    <property type="evidence" value="ECO:0007669"/>
    <property type="project" value="InterPro"/>
</dbReference>
<dbReference type="CDD" id="cd02440">
    <property type="entry name" value="AdoMet_MTases"/>
    <property type="match status" value="1"/>
</dbReference>
<dbReference type="Gene3D" id="3.40.50.150">
    <property type="entry name" value="Vaccinia Virus protein VP39"/>
    <property type="match status" value="1"/>
</dbReference>
<dbReference type="HAMAP" id="MF_01590">
    <property type="entry name" value="tRNA_carboxymethyltr_CmoB"/>
    <property type="match status" value="1"/>
</dbReference>
<dbReference type="InterPro" id="IPR010017">
    <property type="entry name" value="CmoB"/>
</dbReference>
<dbReference type="InterPro" id="IPR027555">
    <property type="entry name" value="Mo5U34_MeTrfas-like"/>
</dbReference>
<dbReference type="InterPro" id="IPR029063">
    <property type="entry name" value="SAM-dependent_MTases_sf"/>
</dbReference>
<dbReference type="NCBIfam" id="NF011650">
    <property type="entry name" value="PRK15068.1"/>
    <property type="match status" value="1"/>
</dbReference>
<dbReference type="NCBIfam" id="TIGR00452">
    <property type="entry name" value="tRNA 5-methoxyuridine(34)/uridine 5-oxyacetic acid(34) synthase CmoB"/>
    <property type="match status" value="1"/>
</dbReference>
<dbReference type="PANTHER" id="PTHR43464">
    <property type="entry name" value="METHYLTRANSFERASE"/>
    <property type="match status" value="1"/>
</dbReference>
<dbReference type="PANTHER" id="PTHR43464:SF95">
    <property type="entry name" value="TRNA U34 CARBOXYMETHYLTRANSFERASE"/>
    <property type="match status" value="1"/>
</dbReference>
<dbReference type="Pfam" id="PF08003">
    <property type="entry name" value="Methyltransf_9"/>
    <property type="match status" value="1"/>
</dbReference>
<dbReference type="SUPFAM" id="SSF53335">
    <property type="entry name" value="S-adenosyl-L-methionine-dependent methyltransferases"/>
    <property type="match status" value="1"/>
</dbReference>
<proteinExistence type="evidence at protein level"/>
<sequence>MIDLAPLVRRLAGTPLAEWANGLQAQLDTKMSKGHGDLQRWQSALDALPALQPEKVDLTDSFTLETECDGETRTVLRKALLGLSPWRKGPFNVFGVHIDTEWRSDWKWSRVSPHLDLKGKRVLDVGCGNGYYQWRMLGAGADSVIGVDPNWLFFCQFQAMQRYLPDLPAWHLPFALEDLPANLEGFDTVFSMGVLYHRKSPIDHLLALKDCLVKGGELVMETLVIPGDVHQVLVPEDRYAQMRNVWFLPSVPALELWMRRAGFTDVRCVDVSHTTVEEQRSTEWMRFQSLGDYLDPNDHSKTVEGLPAPMRAVIVGRKP</sequence>
<feature type="chain" id="PRO_0000313953" description="tRNA U34 carboxymethyltransferase">
    <location>
        <begin position="1"/>
        <end position="319"/>
    </location>
</feature>
<feature type="binding site" evidence="1">
    <location>
        <position position="88"/>
    </location>
    <ligand>
        <name>carboxy-S-adenosyl-L-methionine</name>
        <dbReference type="ChEBI" id="CHEBI:134278"/>
    </ligand>
</feature>
<feature type="binding site" evidence="1">
    <location>
        <position position="102"/>
    </location>
    <ligand>
        <name>carboxy-S-adenosyl-L-methionine</name>
        <dbReference type="ChEBI" id="CHEBI:134278"/>
    </ligand>
</feature>
<feature type="binding site" evidence="1">
    <location>
        <position position="107"/>
    </location>
    <ligand>
        <name>carboxy-S-adenosyl-L-methionine</name>
        <dbReference type="ChEBI" id="CHEBI:134278"/>
    </ligand>
</feature>
<feature type="binding site" evidence="1">
    <location>
        <position position="126"/>
    </location>
    <ligand>
        <name>carboxy-S-adenosyl-L-methionine</name>
        <dbReference type="ChEBI" id="CHEBI:134278"/>
    </ligand>
</feature>
<feature type="binding site" evidence="1">
    <location>
        <begin position="176"/>
        <end position="177"/>
    </location>
    <ligand>
        <name>carboxy-S-adenosyl-L-methionine</name>
        <dbReference type="ChEBI" id="CHEBI:134278"/>
    </ligand>
</feature>
<feature type="binding site" evidence="1">
    <location>
        <position position="192"/>
    </location>
    <ligand>
        <name>carboxy-S-adenosyl-L-methionine</name>
        <dbReference type="ChEBI" id="CHEBI:134278"/>
    </ligand>
</feature>
<feature type="binding site" evidence="1">
    <location>
        <position position="196"/>
    </location>
    <ligand>
        <name>carboxy-S-adenosyl-L-methionine</name>
        <dbReference type="ChEBI" id="CHEBI:134278"/>
    </ligand>
</feature>
<feature type="binding site" evidence="1">
    <location>
        <position position="311"/>
    </location>
    <ligand>
        <name>carboxy-S-adenosyl-L-methionine</name>
        <dbReference type="ChEBI" id="CHEBI:134278"/>
    </ligand>
</feature>
<feature type="helix" evidence="2">
    <location>
        <begin position="5"/>
        <end position="11"/>
    </location>
</feature>
<feature type="helix" evidence="2">
    <location>
        <begin position="17"/>
        <end position="33"/>
    </location>
</feature>
<feature type="helix" evidence="2">
    <location>
        <begin position="35"/>
        <end position="39"/>
    </location>
</feature>
<feature type="helix" evidence="2">
    <location>
        <begin position="42"/>
        <end position="47"/>
    </location>
</feature>
<feature type="strand" evidence="2">
    <location>
        <begin position="54"/>
        <end position="57"/>
    </location>
</feature>
<feature type="strand" evidence="2">
    <location>
        <begin position="59"/>
        <end position="61"/>
    </location>
</feature>
<feature type="strand" evidence="2">
    <location>
        <begin position="63"/>
        <end position="65"/>
    </location>
</feature>
<feature type="helix" evidence="2">
    <location>
        <begin position="70"/>
        <end position="81"/>
    </location>
</feature>
<feature type="strand" evidence="2">
    <location>
        <begin position="91"/>
        <end position="93"/>
    </location>
</feature>
<feature type="strand" evidence="2">
    <location>
        <begin position="96"/>
        <end position="98"/>
    </location>
</feature>
<feature type="helix" evidence="2">
    <location>
        <begin position="104"/>
        <end position="111"/>
    </location>
</feature>
<feature type="helix" evidence="2">
    <location>
        <begin position="112"/>
        <end position="114"/>
    </location>
</feature>
<feature type="strand" evidence="2">
    <location>
        <begin position="121"/>
        <end position="125"/>
    </location>
</feature>
<feature type="helix" evidence="2">
    <location>
        <begin position="131"/>
        <end position="138"/>
    </location>
</feature>
<feature type="strand" evidence="2">
    <location>
        <begin position="142"/>
        <end position="147"/>
    </location>
</feature>
<feature type="helix" evidence="2">
    <location>
        <begin position="151"/>
        <end position="161"/>
    </location>
</feature>
<feature type="strand" evidence="2">
    <location>
        <begin position="167"/>
        <end position="172"/>
    </location>
</feature>
<feature type="helix" evidence="2">
    <location>
        <begin position="176"/>
        <end position="178"/>
    </location>
</feature>
<feature type="strand" evidence="2">
    <location>
        <begin position="186"/>
        <end position="193"/>
    </location>
</feature>
<feature type="helix" evidence="2">
    <location>
        <begin position="195"/>
        <end position="197"/>
    </location>
</feature>
<feature type="helix" evidence="2">
    <location>
        <begin position="201"/>
        <end position="209"/>
    </location>
</feature>
<feature type="strand" evidence="2">
    <location>
        <begin position="212"/>
        <end position="223"/>
    </location>
</feature>
<feature type="strand" evidence="2">
    <location>
        <begin position="225"/>
        <end position="227"/>
    </location>
</feature>
<feature type="strand" evidence="2">
    <location>
        <begin position="242"/>
        <end position="244"/>
    </location>
</feature>
<feature type="strand" evidence="2">
    <location>
        <begin position="248"/>
        <end position="250"/>
    </location>
</feature>
<feature type="helix" evidence="2">
    <location>
        <begin position="251"/>
        <end position="260"/>
    </location>
</feature>
<feature type="strand" evidence="2">
    <location>
        <begin position="264"/>
        <end position="273"/>
    </location>
</feature>
<feature type="turn" evidence="2">
    <location>
        <begin position="276"/>
        <end position="278"/>
    </location>
</feature>
<feature type="helix" evidence="2">
    <location>
        <begin position="290"/>
        <end position="293"/>
    </location>
</feature>
<feature type="strand" evidence="2">
    <location>
        <begin position="298"/>
        <end position="302"/>
    </location>
</feature>
<feature type="strand" evidence="2">
    <location>
        <begin position="305"/>
        <end position="307"/>
    </location>
</feature>
<feature type="strand" evidence="2">
    <location>
        <begin position="310"/>
        <end position="317"/>
    </location>
</feature>
<organism>
    <name type="scientific">Pseudomonas syringae pv. tomato (strain ATCC BAA-871 / DC3000)</name>
    <dbReference type="NCBI Taxonomy" id="223283"/>
    <lineage>
        <taxon>Bacteria</taxon>
        <taxon>Pseudomonadati</taxon>
        <taxon>Pseudomonadota</taxon>
        <taxon>Gammaproteobacteria</taxon>
        <taxon>Pseudomonadales</taxon>
        <taxon>Pseudomonadaceae</taxon>
        <taxon>Pseudomonas</taxon>
    </lineage>
</organism>
<evidence type="ECO:0000255" key="1">
    <source>
        <dbReference type="HAMAP-Rule" id="MF_01590"/>
    </source>
</evidence>
<evidence type="ECO:0007829" key="2">
    <source>
        <dbReference type="PDB" id="4P7C"/>
    </source>
</evidence>
<name>CMOB_PSESM</name>